<feature type="chain" id="PRO_0000352124" description="Small ribosomal subunit protein uS2c">
    <location>
        <begin position="1"/>
        <end position="236"/>
    </location>
</feature>
<comment type="subcellular location">
    <subcellularLocation>
        <location>Plastid</location>
        <location>Chloroplast</location>
    </subcellularLocation>
</comment>
<comment type="similarity">
    <text evidence="1">Belongs to the universal ribosomal protein uS2 family.</text>
</comment>
<accession>Q56P10</accession>
<dbReference type="EMBL" id="AY865171">
    <property type="protein sequence ID" value="AAX58145.1"/>
    <property type="molecule type" value="Genomic_DNA"/>
</dbReference>
<dbReference type="EMBL" id="DQ383816">
    <property type="protein sequence ID" value="ABD47223.1"/>
    <property type="molecule type" value="Genomic_DNA"/>
</dbReference>
<dbReference type="EMBL" id="AP007232">
    <property type="protein sequence ID" value="BAE47584.1"/>
    <property type="molecule type" value="Genomic_DNA"/>
</dbReference>
<dbReference type="RefSeq" id="YP_398319.1">
    <property type="nucleotide sequence ID" value="NC_007578.1"/>
</dbReference>
<dbReference type="SMR" id="Q56P10"/>
<dbReference type="GeneID" id="3772825"/>
<dbReference type="KEGG" id="lsv:3772825"/>
<dbReference type="OrthoDB" id="565471at2759"/>
<dbReference type="GO" id="GO:0009507">
    <property type="term" value="C:chloroplast"/>
    <property type="evidence" value="ECO:0007669"/>
    <property type="project" value="UniProtKB-SubCell"/>
</dbReference>
<dbReference type="GO" id="GO:0015935">
    <property type="term" value="C:small ribosomal subunit"/>
    <property type="evidence" value="ECO:0007669"/>
    <property type="project" value="InterPro"/>
</dbReference>
<dbReference type="GO" id="GO:0003735">
    <property type="term" value="F:structural constituent of ribosome"/>
    <property type="evidence" value="ECO:0007669"/>
    <property type="project" value="InterPro"/>
</dbReference>
<dbReference type="GO" id="GO:0006412">
    <property type="term" value="P:translation"/>
    <property type="evidence" value="ECO:0007669"/>
    <property type="project" value="UniProtKB-UniRule"/>
</dbReference>
<dbReference type="CDD" id="cd01425">
    <property type="entry name" value="RPS2"/>
    <property type="match status" value="1"/>
</dbReference>
<dbReference type="FunFam" id="3.40.50.10490:FF:000101">
    <property type="match status" value="1"/>
</dbReference>
<dbReference type="FunFam" id="1.10.287.610:FF:000001">
    <property type="entry name" value="30S ribosomal protein S2"/>
    <property type="match status" value="1"/>
</dbReference>
<dbReference type="Gene3D" id="3.40.50.10490">
    <property type="entry name" value="Glucose-6-phosphate isomerase like protein, domain 1"/>
    <property type="match status" value="1"/>
</dbReference>
<dbReference type="Gene3D" id="1.10.287.610">
    <property type="entry name" value="Helix hairpin bin"/>
    <property type="match status" value="1"/>
</dbReference>
<dbReference type="HAMAP" id="MF_00291_B">
    <property type="entry name" value="Ribosomal_uS2_B"/>
    <property type="match status" value="1"/>
</dbReference>
<dbReference type="InterPro" id="IPR001865">
    <property type="entry name" value="Ribosomal_uS2"/>
</dbReference>
<dbReference type="InterPro" id="IPR005706">
    <property type="entry name" value="Ribosomal_uS2_bac/mit/plastid"/>
</dbReference>
<dbReference type="InterPro" id="IPR018130">
    <property type="entry name" value="Ribosomal_uS2_CS"/>
</dbReference>
<dbReference type="InterPro" id="IPR023591">
    <property type="entry name" value="Ribosomal_uS2_flav_dom_sf"/>
</dbReference>
<dbReference type="NCBIfam" id="TIGR01011">
    <property type="entry name" value="rpsB_bact"/>
    <property type="match status" value="1"/>
</dbReference>
<dbReference type="PANTHER" id="PTHR12534">
    <property type="entry name" value="30S RIBOSOMAL PROTEIN S2 PROKARYOTIC AND ORGANELLAR"/>
    <property type="match status" value="1"/>
</dbReference>
<dbReference type="PANTHER" id="PTHR12534:SF0">
    <property type="entry name" value="SMALL RIBOSOMAL SUBUNIT PROTEIN US2M"/>
    <property type="match status" value="1"/>
</dbReference>
<dbReference type="Pfam" id="PF00318">
    <property type="entry name" value="Ribosomal_S2"/>
    <property type="match status" value="1"/>
</dbReference>
<dbReference type="PRINTS" id="PR00395">
    <property type="entry name" value="RIBOSOMALS2"/>
</dbReference>
<dbReference type="SUPFAM" id="SSF52313">
    <property type="entry name" value="Ribosomal protein S2"/>
    <property type="match status" value="1"/>
</dbReference>
<dbReference type="PROSITE" id="PS00962">
    <property type="entry name" value="RIBOSOMAL_S2_1"/>
    <property type="match status" value="1"/>
</dbReference>
<dbReference type="PROSITE" id="PS00963">
    <property type="entry name" value="RIBOSOMAL_S2_2"/>
    <property type="match status" value="1"/>
</dbReference>
<name>RR2_LACSA</name>
<keyword id="KW-0150">Chloroplast</keyword>
<keyword id="KW-0934">Plastid</keyword>
<keyword id="KW-0687">Ribonucleoprotein</keyword>
<keyword id="KW-0689">Ribosomal protein</keyword>
<gene>
    <name type="primary">rps2</name>
    <name type="ORF">PSC015</name>
</gene>
<reference key="1">
    <citation type="journal article" date="2005" name="Mol. Biol. Evol.">
        <title>Two chloroplast DNA inversions originated simultaneously during the early evolution of the sunflower family (Asteraceae).</title>
        <authorList>
            <person name="Kim K.-J."/>
            <person name="Choi K.-S."/>
            <person name="Jansen R.K."/>
        </authorList>
    </citation>
    <scope>NUCLEOTIDE SEQUENCE [GENOMIC DNA]</scope>
</reference>
<reference key="2">
    <citation type="journal article" date="2006" name="Transgenic Res.">
        <title>Efficient and stable transformation of Lactuca sativa L. cv. Cisco (lettuce) plastids.</title>
        <authorList>
            <person name="Kanamoto H."/>
            <person name="Yamashita A."/>
            <person name="Asao H."/>
            <person name="Okumura S."/>
            <person name="Takase H."/>
            <person name="Hattori M."/>
            <person name="Yokota A."/>
            <person name="Tomizawa K."/>
        </authorList>
    </citation>
    <scope>NUCLEOTIDE SEQUENCE [LARGE SCALE GENOMIC DNA]</scope>
    <source>
        <strain>cv. Cisco</strain>
    </source>
</reference>
<reference key="3">
    <citation type="submission" date="2006-01" db="EMBL/GenBank/DDBJ databases">
        <title>A comparison of the first two published chloroplast genomes in Asteraceae: Lactuca and Helianthus.</title>
        <authorList>
            <person name="Timme R.E."/>
            <person name="Kuehl J.V."/>
            <person name="Boore J.L."/>
            <person name="Jansen R.K."/>
        </authorList>
    </citation>
    <scope>NUCLEOTIDE SEQUENCE [LARGE SCALE GENOMIC DNA]</scope>
    <source>
        <strain>cv. Salinas</strain>
    </source>
</reference>
<sequence>MTRRYWNINLEEMMEAGVHFGHGTRKWNPKMAPYISAKRKGIHITNLTRTARFLSEACDLVFDAASRGKQFLIVGTKNKEADSVAWAAIRARCHYVNKKWLGGMLTNWSTTETRLHKFRDLRTEQKTGGLDRLPKRDAAMLKRQLSHLQTYLGGIKYMTGLPDIVIIVDQHEEYTALQECITLGIPTICLIDTNCDPDLADISIPANDDAISSIRLILNKLVFAICEGRSGYIRNP</sequence>
<geneLocation type="chloroplast"/>
<protein>
    <recommendedName>
        <fullName evidence="1">Small ribosomal subunit protein uS2c</fullName>
    </recommendedName>
    <alternativeName>
        <fullName>30S ribosomal protein S2, chloroplastic</fullName>
    </alternativeName>
</protein>
<evidence type="ECO:0000305" key="1"/>
<proteinExistence type="inferred from homology"/>
<organism>
    <name type="scientific">Lactuca sativa</name>
    <name type="common">Garden lettuce</name>
    <dbReference type="NCBI Taxonomy" id="4236"/>
    <lineage>
        <taxon>Eukaryota</taxon>
        <taxon>Viridiplantae</taxon>
        <taxon>Streptophyta</taxon>
        <taxon>Embryophyta</taxon>
        <taxon>Tracheophyta</taxon>
        <taxon>Spermatophyta</taxon>
        <taxon>Magnoliopsida</taxon>
        <taxon>eudicotyledons</taxon>
        <taxon>Gunneridae</taxon>
        <taxon>Pentapetalae</taxon>
        <taxon>asterids</taxon>
        <taxon>campanulids</taxon>
        <taxon>Asterales</taxon>
        <taxon>Asteraceae</taxon>
        <taxon>Cichorioideae</taxon>
        <taxon>Cichorieae</taxon>
        <taxon>Lactucinae</taxon>
        <taxon>Lactuca</taxon>
    </lineage>
</organism>